<gene>
    <name type="primary">gtr-1</name>
    <name type="synonym">glr1</name>
    <name type="ORF">B10C3.130</name>
    <name type="ORF">NCU03339</name>
</gene>
<organism>
    <name type="scientific">Neurospora crassa (strain ATCC 24698 / 74-OR23-1A / CBS 708.71 / DSM 1257 / FGSC 987)</name>
    <dbReference type="NCBI Taxonomy" id="367110"/>
    <lineage>
        <taxon>Eukaryota</taxon>
        <taxon>Fungi</taxon>
        <taxon>Dikarya</taxon>
        <taxon>Ascomycota</taxon>
        <taxon>Pezizomycotina</taxon>
        <taxon>Sordariomycetes</taxon>
        <taxon>Sordariomycetidae</taxon>
        <taxon>Sordariales</taxon>
        <taxon>Sordariaceae</taxon>
        <taxon>Neurospora</taxon>
    </lineage>
</organism>
<reference key="1">
    <citation type="journal article" date="2003" name="Nucleic Acids Res.">
        <title>What's in the genome of a filamentous fungus? Analysis of the Neurospora genome sequence.</title>
        <authorList>
            <person name="Mannhaupt G."/>
            <person name="Montrone C."/>
            <person name="Haase D."/>
            <person name="Mewes H.-W."/>
            <person name="Aign V."/>
            <person name="Hoheisel J.D."/>
            <person name="Fartmann B."/>
            <person name="Nyakatura G."/>
            <person name="Kempken F."/>
            <person name="Maier J."/>
            <person name="Schulte U."/>
        </authorList>
    </citation>
    <scope>NUCLEOTIDE SEQUENCE [LARGE SCALE GENOMIC DNA]</scope>
    <source>
        <strain>ATCC 24698 / 74-OR23-1A / CBS 708.71 / DSM 1257 / FGSC 987</strain>
    </source>
</reference>
<reference key="2">
    <citation type="journal article" date="2003" name="Nature">
        <title>The genome sequence of the filamentous fungus Neurospora crassa.</title>
        <authorList>
            <person name="Galagan J.E."/>
            <person name="Calvo S.E."/>
            <person name="Borkovich K.A."/>
            <person name="Selker E.U."/>
            <person name="Read N.D."/>
            <person name="Jaffe D.B."/>
            <person name="FitzHugh W."/>
            <person name="Ma L.-J."/>
            <person name="Smirnov S."/>
            <person name="Purcell S."/>
            <person name="Rehman B."/>
            <person name="Elkins T."/>
            <person name="Engels R."/>
            <person name="Wang S."/>
            <person name="Nielsen C.B."/>
            <person name="Butler J."/>
            <person name="Endrizzi M."/>
            <person name="Qui D."/>
            <person name="Ianakiev P."/>
            <person name="Bell-Pedersen D."/>
            <person name="Nelson M.A."/>
            <person name="Werner-Washburne M."/>
            <person name="Selitrennikoff C.P."/>
            <person name="Kinsey J.A."/>
            <person name="Braun E.L."/>
            <person name="Zelter A."/>
            <person name="Schulte U."/>
            <person name="Kothe G.O."/>
            <person name="Jedd G."/>
            <person name="Mewes H.-W."/>
            <person name="Staben C."/>
            <person name="Marcotte E."/>
            <person name="Greenberg D."/>
            <person name="Roy A."/>
            <person name="Foley K."/>
            <person name="Naylor J."/>
            <person name="Stange-Thomann N."/>
            <person name="Barrett R."/>
            <person name="Gnerre S."/>
            <person name="Kamal M."/>
            <person name="Kamvysselis M."/>
            <person name="Mauceli E.W."/>
            <person name="Bielke C."/>
            <person name="Rudd S."/>
            <person name="Frishman D."/>
            <person name="Krystofova S."/>
            <person name="Rasmussen C."/>
            <person name="Metzenberg R.L."/>
            <person name="Perkins D.D."/>
            <person name="Kroken S."/>
            <person name="Cogoni C."/>
            <person name="Macino G."/>
            <person name="Catcheside D.E.A."/>
            <person name="Li W."/>
            <person name="Pratt R.J."/>
            <person name="Osmani S.A."/>
            <person name="DeSouza C.P.C."/>
            <person name="Glass N.L."/>
            <person name="Orbach M.J."/>
            <person name="Berglund J.A."/>
            <person name="Voelker R."/>
            <person name="Yarden O."/>
            <person name="Plamann M."/>
            <person name="Seiler S."/>
            <person name="Dunlap J.C."/>
            <person name="Radford A."/>
            <person name="Aramayo R."/>
            <person name="Natvig D.O."/>
            <person name="Alex L.A."/>
            <person name="Mannhaupt G."/>
            <person name="Ebbole D.J."/>
            <person name="Freitag M."/>
            <person name="Paulsen I."/>
            <person name="Sachs M.S."/>
            <person name="Lander E.S."/>
            <person name="Nusbaum C."/>
            <person name="Birren B.W."/>
        </authorList>
    </citation>
    <scope>NUCLEOTIDE SEQUENCE [LARGE SCALE GENOMIC DNA]</scope>
    <source>
        <strain>ATCC 24698 / 74-OR23-1A / CBS 708.71 / DSM 1257 / FGSC 987</strain>
    </source>
</reference>
<proteinExistence type="inferred from homology"/>
<protein>
    <recommendedName>
        <fullName>Glutathione reductase</fullName>
        <shortName>GR</shortName>
        <shortName>GRase</shortName>
        <ecNumber>1.8.1.7</ecNumber>
    </recommendedName>
</protein>
<name>GSHR_NEUCR</name>
<comment type="function">
    <text evidence="3">Catalyzes the reduction of glutathione disulfide (GSSG) to reduced glutathione (GSH). Constitutes the major mechanism to maintain a high GSH:GSSG ratio in the cytosol.</text>
</comment>
<comment type="catalytic activity">
    <reaction evidence="3">
        <text>2 glutathione + NADP(+) = glutathione disulfide + NADPH + H(+)</text>
        <dbReference type="Rhea" id="RHEA:11740"/>
        <dbReference type="ChEBI" id="CHEBI:15378"/>
        <dbReference type="ChEBI" id="CHEBI:57783"/>
        <dbReference type="ChEBI" id="CHEBI:57925"/>
        <dbReference type="ChEBI" id="CHEBI:58297"/>
        <dbReference type="ChEBI" id="CHEBI:58349"/>
        <dbReference type="EC" id="1.8.1.7"/>
    </reaction>
</comment>
<comment type="cofactor">
    <cofactor evidence="3">
        <name>FAD</name>
        <dbReference type="ChEBI" id="CHEBI:57692"/>
    </cofactor>
    <text evidence="3">Binds 1 FAD per subunit.</text>
</comment>
<comment type="subunit">
    <text evidence="3">Homodimer.</text>
</comment>
<comment type="subcellular location">
    <subcellularLocation>
        <location evidence="3">Cytoplasm</location>
    </subcellularLocation>
    <subcellularLocation>
        <location evidence="3">Mitochondrion</location>
    </subcellularLocation>
</comment>
<comment type="miscellaneous">
    <text evidence="3">The active site is a redox-active disulfide bond.</text>
</comment>
<comment type="similarity">
    <text evidence="4">Belongs to the class-I pyridine nucleotide-disulfide oxidoreductase family.</text>
</comment>
<comment type="sequence caution" evidence="4">
    <conflict type="erroneous initiation">
        <sequence resource="EMBL-CDS" id="ESA43520"/>
    </conflict>
    <text>Extended N-terminus.</text>
</comment>
<comment type="sequence caution" evidence="4">
    <conflict type="erroneous initiation">
        <sequence resource="EMBL-CDS" id="ESA43521"/>
    </conflict>
    <text>Extended N-terminus.</text>
</comment>
<accession>Q873E8</accession>
<accession>Q1K529</accession>
<accession>V5IP83</accession>
<dbReference type="EC" id="1.8.1.7"/>
<dbReference type="EMBL" id="BX284749">
    <property type="protein sequence ID" value="CAD70360.1"/>
    <property type="molecule type" value="Genomic_DNA"/>
</dbReference>
<dbReference type="EMBL" id="CM002237">
    <property type="protein sequence ID" value="ESA43520.1"/>
    <property type="status" value="ALT_INIT"/>
    <property type="molecule type" value="Genomic_DNA"/>
</dbReference>
<dbReference type="EMBL" id="CM002237">
    <property type="protein sequence ID" value="ESA43521.1"/>
    <property type="status" value="ALT_INIT"/>
    <property type="molecule type" value="Genomic_DNA"/>
</dbReference>
<dbReference type="RefSeq" id="XP_011393526.1">
    <property type="nucleotide sequence ID" value="XM_011395224.1"/>
</dbReference>
<dbReference type="RefSeq" id="XP_011393527.1">
    <property type="nucleotide sequence ID" value="XM_011395225.1"/>
</dbReference>
<dbReference type="SMR" id="Q873E8"/>
<dbReference type="FunCoup" id="Q873E8">
    <property type="interactions" value="1040"/>
</dbReference>
<dbReference type="STRING" id="367110.Q873E8"/>
<dbReference type="PaxDb" id="5141-EFNCRP00000002546"/>
<dbReference type="EnsemblFungi" id="ESA43520">
    <property type="protein sequence ID" value="ESA43520"/>
    <property type="gene ID" value="NCU03339"/>
</dbReference>
<dbReference type="EnsemblFungi" id="ESA43521">
    <property type="protein sequence ID" value="ESA43521"/>
    <property type="gene ID" value="NCU03339"/>
</dbReference>
<dbReference type="GeneID" id="3872613"/>
<dbReference type="KEGG" id="ncr:NCU03339"/>
<dbReference type="HOGENOM" id="CLU_016755_2_2_1"/>
<dbReference type="InParanoid" id="Q873E8"/>
<dbReference type="OMA" id="MSKHYDY"/>
<dbReference type="OrthoDB" id="5956163at2759"/>
<dbReference type="Proteomes" id="UP000001805">
    <property type="component" value="Chromosome 6, Linkage Group II"/>
</dbReference>
<dbReference type="GO" id="GO:0005829">
    <property type="term" value="C:cytosol"/>
    <property type="evidence" value="ECO:0000318"/>
    <property type="project" value="GO_Central"/>
</dbReference>
<dbReference type="GO" id="GO:0005739">
    <property type="term" value="C:mitochondrion"/>
    <property type="evidence" value="ECO:0000318"/>
    <property type="project" value="GO_Central"/>
</dbReference>
<dbReference type="GO" id="GO:0050660">
    <property type="term" value="F:flavin adenine dinucleotide binding"/>
    <property type="evidence" value="ECO:0000318"/>
    <property type="project" value="GO_Central"/>
</dbReference>
<dbReference type="GO" id="GO:0004362">
    <property type="term" value="F:glutathione-disulfide reductase (NADPH) activity"/>
    <property type="evidence" value="ECO:0000318"/>
    <property type="project" value="GO_Central"/>
</dbReference>
<dbReference type="GO" id="GO:0050661">
    <property type="term" value="F:NADP binding"/>
    <property type="evidence" value="ECO:0007669"/>
    <property type="project" value="InterPro"/>
</dbReference>
<dbReference type="GO" id="GO:0045454">
    <property type="term" value="P:cell redox homeostasis"/>
    <property type="evidence" value="ECO:0000318"/>
    <property type="project" value="GO_Central"/>
</dbReference>
<dbReference type="GO" id="GO:0036245">
    <property type="term" value="P:cellular response to menadione"/>
    <property type="evidence" value="ECO:0007669"/>
    <property type="project" value="EnsemblFungi"/>
</dbReference>
<dbReference type="GO" id="GO:0034599">
    <property type="term" value="P:cellular response to oxidative stress"/>
    <property type="evidence" value="ECO:0000318"/>
    <property type="project" value="GO_Central"/>
</dbReference>
<dbReference type="GO" id="GO:0006749">
    <property type="term" value="P:glutathione metabolic process"/>
    <property type="evidence" value="ECO:0000318"/>
    <property type="project" value="GO_Central"/>
</dbReference>
<dbReference type="FunFam" id="3.30.390.30:FF:000003">
    <property type="entry name" value="Glutathione reductase"/>
    <property type="match status" value="1"/>
</dbReference>
<dbReference type="FunFam" id="3.50.50.60:FF:000141">
    <property type="entry name" value="Glutathione reductase"/>
    <property type="match status" value="1"/>
</dbReference>
<dbReference type="FunFam" id="3.50.50.60:FF:000671">
    <property type="entry name" value="Thioredoxin reductase 2, tandem duplicate 1"/>
    <property type="match status" value="1"/>
</dbReference>
<dbReference type="Gene3D" id="3.30.390.30">
    <property type="match status" value="1"/>
</dbReference>
<dbReference type="Gene3D" id="3.50.50.60">
    <property type="entry name" value="FAD/NAD(P)-binding domain"/>
    <property type="match status" value="2"/>
</dbReference>
<dbReference type="InterPro" id="IPR036188">
    <property type="entry name" value="FAD/NAD-bd_sf"/>
</dbReference>
<dbReference type="InterPro" id="IPR023753">
    <property type="entry name" value="FAD/NAD-binding_dom"/>
</dbReference>
<dbReference type="InterPro" id="IPR016156">
    <property type="entry name" value="FAD/NAD-linked_Rdtase_dimer_sf"/>
</dbReference>
<dbReference type="InterPro" id="IPR006322">
    <property type="entry name" value="Glutathione_Rdtase_euk/bac"/>
</dbReference>
<dbReference type="InterPro" id="IPR046952">
    <property type="entry name" value="GSHR/TRXR-like"/>
</dbReference>
<dbReference type="InterPro" id="IPR001100">
    <property type="entry name" value="Pyr_nuc-diS_OxRdtase"/>
</dbReference>
<dbReference type="InterPro" id="IPR004099">
    <property type="entry name" value="Pyr_nucl-diS_OxRdtase_dimer"/>
</dbReference>
<dbReference type="InterPro" id="IPR012999">
    <property type="entry name" value="Pyr_OxRdtase_I_AS"/>
</dbReference>
<dbReference type="NCBIfam" id="TIGR01421">
    <property type="entry name" value="gluta_reduc_1"/>
    <property type="match status" value="1"/>
</dbReference>
<dbReference type="NCBIfam" id="NF004776">
    <property type="entry name" value="PRK06116.1"/>
    <property type="match status" value="1"/>
</dbReference>
<dbReference type="PANTHER" id="PTHR42737">
    <property type="entry name" value="GLUTATHIONE REDUCTASE"/>
    <property type="match status" value="1"/>
</dbReference>
<dbReference type="PANTHER" id="PTHR42737:SF2">
    <property type="entry name" value="GLUTATHIONE REDUCTASE"/>
    <property type="match status" value="1"/>
</dbReference>
<dbReference type="Pfam" id="PF07992">
    <property type="entry name" value="Pyr_redox_2"/>
    <property type="match status" value="1"/>
</dbReference>
<dbReference type="Pfam" id="PF02852">
    <property type="entry name" value="Pyr_redox_dim"/>
    <property type="match status" value="1"/>
</dbReference>
<dbReference type="PIRSF" id="PIRSF000350">
    <property type="entry name" value="Mercury_reductase_MerA"/>
    <property type="match status" value="1"/>
</dbReference>
<dbReference type="PRINTS" id="PR00368">
    <property type="entry name" value="FADPNR"/>
</dbReference>
<dbReference type="PRINTS" id="PR00411">
    <property type="entry name" value="PNDRDTASEI"/>
</dbReference>
<dbReference type="SUPFAM" id="SSF51905">
    <property type="entry name" value="FAD/NAD(P)-binding domain"/>
    <property type="match status" value="1"/>
</dbReference>
<dbReference type="SUPFAM" id="SSF55424">
    <property type="entry name" value="FAD/NAD-linked reductases, dimerisation (C-terminal) domain"/>
    <property type="match status" value="1"/>
</dbReference>
<dbReference type="PROSITE" id="PS00076">
    <property type="entry name" value="PYRIDINE_REDOX_1"/>
    <property type="match status" value="1"/>
</dbReference>
<feature type="chain" id="PRO_0000067969" description="Glutathione reductase">
    <location>
        <begin position="1"/>
        <end position="468"/>
    </location>
</feature>
<feature type="active site" description="Proton acceptor" evidence="1">
    <location>
        <position position="457"/>
    </location>
</feature>
<feature type="binding site" evidence="3">
    <location>
        <position position="17"/>
    </location>
    <ligand>
        <name>FAD</name>
        <dbReference type="ChEBI" id="CHEBI:57692"/>
    </ligand>
</feature>
<feature type="binding site" evidence="1">
    <location>
        <position position="17"/>
    </location>
    <ligand>
        <name>glutathione</name>
        <dbReference type="ChEBI" id="CHEBI:57925"/>
    </ligand>
</feature>
<feature type="binding site" evidence="3">
    <location>
        <position position="18"/>
    </location>
    <ligand>
        <name>FAD</name>
        <dbReference type="ChEBI" id="CHEBI:57692"/>
    </ligand>
</feature>
<feature type="binding site" evidence="1">
    <location>
        <position position="24"/>
    </location>
    <ligand>
        <name>glutathione</name>
        <dbReference type="ChEBI" id="CHEBI:57925"/>
    </ligand>
</feature>
<feature type="binding site" evidence="3">
    <location>
        <position position="38"/>
    </location>
    <ligand>
        <name>FAD</name>
        <dbReference type="ChEBI" id="CHEBI:57692"/>
    </ligand>
</feature>
<feature type="binding site" evidence="3">
    <location>
        <position position="45"/>
    </location>
    <ligand>
        <name>FAD</name>
        <dbReference type="ChEBI" id="CHEBI:57692"/>
    </ligand>
</feature>
<feature type="binding site" evidence="3">
    <location>
        <position position="46"/>
    </location>
    <ligand>
        <name>FAD</name>
        <dbReference type="ChEBI" id="CHEBI:57692"/>
    </ligand>
</feature>
<feature type="binding site" evidence="3">
    <location>
        <position position="54"/>
    </location>
    <ligand>
        <name>FAD</name>
        <dbReference type="ChEBI" id="CHEBI:57692"/>
    </ligand>
</feature>
<feature type="binding site" evidence="1">
    <location>
        <position position="103"/>
    </location>
    <ligand>
        <name>glutathione</name>
        <dbReference type="ChEBI" id="CHEBI:57925"/>
    </ligand>
</feature>
<feature type="binding site" evidence="3">
    <location>
        <position position="119"/>
    </location>
    <ligand>
        <name>FAD</name>
        <dbReference type="ChEBI" id="CHEBI:57692"/>
    </ligand>
</feature>
<feature type="binding site" evidence="2">
    <location>
        <position position="185"/>
    </location>
    <ligand>
        <name>NADP(+)</name>
        <dbReference type="ChEBI" id="CHEBI:58349"/>
    </ligand>
</feature>
<feature type="binding site" evidence="2">
    <location>
        <position position="188"/>
    </location>
    <ligand>
        <name>NADP(+)</name>
        <dbReference type="ChEBI" id="CHEBI:58349"/>
    </ligand>
</feature>
<feature type="binding site" evidence="2">
    <location>
        <position position="191"/>
    </location>
    <ligand>
        <name>NADP(+)</name>
        <dbReference type="ChEBI" id="CHEBI:58349"/>
    </ligand>
</feature>
<feature type="binding site" evidence="2">
    <location>
        <position position="208"/>
    </location>
    <ligand>
        <name>NADP(+)</name>
        <dbReference type="ChEBI" id="CHEBI:58349"/>
    </ligand>
</feature>
<feature type="binding site" evidence="2">
    <location>
        <position position="214"/>
    </location>
    <ligand>
        <name>NADP(+)</name>
        <dbReference type="ChEBI" id="CHEBI:58349"/>
    </ligand>
</feature>
<feature type="binding site" evidence="2">
    <location>
        <position position="276"/>
    </location>
    <ligand>
        <name>NADP(+)</name>
        <dbReference type="ChEBI" id="CHEBI:58349"/>
    </ligand>
</feature>
<feature type="binding site" evidence="3">
    <location>
        <position position="317"/>
    </location>
    <ligand>
        <name>FAD</name>
        <dbReference type="ChEBI" id="CHEBI:57692"/>
    </ligand>
</feature>
<feature type="binding site" evidence="2">
    <location>
        <position position="323"/>
    </location>
    <ligand>
        <name>NADP(+)</name>
        <dbReference type="ChEBI" id="CHEBI:58349"/>
    </ligand>
</feature>
<feature type="binding site" evidence="3">
    <location>
        <position position="325"/>
    </location>
    <ligand>
        <name>FAD</name>
        <dbReference type="ChEBI" id="CHEBI:57692"/>
    </ligand>
</feature>
<feature type="binding site" evidence="1">
    <location>
        <position position="333"/>
    </location>
    <ligand>
        <name>glutathione</name>
        <dbReference type="ChEBI" id="CHEBI:57925"/>
    </ligand>
</feature>
<feature type="binding site" evidence="2">
    <location>
        <position position="358"/>
    </location>
    <ligand>
        <name>NADP(+)</name>
        <dbReference type="ChEBI" id="CHEBI:58349"/>
    </ligand>
</feature>
<feature type="binding site" evidence="3">
    <location>
        <position position="410"/>
    </location>
    <ligand>
        <name>glutathione</name>
        <dbReference type="ChEBI" id="CHEBI:57925"/>
    </ligand>
</feature>
<feature type="binding site" evidence="3">
    <location>
        <position position="457"/>
    </location>
    <ligand>
        <name>FAD</name>
        <dbReference type="ChEBI" id="CHEBI:57692"/>
    </ligand>
</feature>
<feature type="disulfide bond" description="Redox-active" evidence="3">
    <location>
        <begin position="46"/>
        <end position="51"/>
    </location>
</feature>
<keyword id="KW-0963">Cytoplasm</keyword>
<keyword id="KW-1015">Disulfide bond</keyword>
<keyword id="KW-0274">FAD</keyword>
<keyword id="KW-0285">Flavoprotein</keyword>
<keyword id="KW-0496">Mitochondrion</keyword>
<keyword id="KW-0521">NADP</keyword>
<keyword id="KW-0560">Oxidoreductase</keyword>
<keyword id="KW-0676">Redox-active center</keyword>
<keyword id="KW-1185">Reference proteome</keyword>
<evidence type="ECO:0000250" key="1">
    <source>
        <dbReference type="UniProtKB" id="P00390"/>
    </source>
</evidence>
<evidence type="ECO:0000250" key="2">
    <source>
        <dbReference type="UniProtKB" id="P06715"/>
    </source>
</evidence>
<evidence type="ECO:0000250" key="3">
    <source>
        <dbReference type="UniProtKB" id="P41921"/>
    </source>
</evidence>
<evidence type="ECO:0000305" key="4"/>
<sequence>MAPISRETDFLVIGGGSGGIATARAAAGKYGIKSMVVEGKRLGGTCVNVGCVPKKVTFYAALVAETIHQAKDYGFSVEQTAPFDWPTFKQKRDAYVARLNGIYERNLANDKVEYVHGWAKLLSPNSVEVTLDDGTKSVVNAKKILIAVGGNPTIPPHIPGSEYGTNSDGFFDIDTLPKKVALVGAGYIAVEFAGMLNALGVETHLFIRHDTFLRSFDPMIQQVSVKEYERIGVKVHKKSQLTSVQKDAAGKLAINFKEGEGEQSISDVDHLIWAVGRTPAVEGLGLDKAGVKTNEKGYIEVDEYQNTSTENIYAVGDVCGQVELTPVAIAAGRKLAARLFGPEEFRTLKLNYDNVPSVVFAHPEIGSIGLTEPEAVAKYGAENLKIYKSSFTAMYYAMMKPEDKAPTAYKLICAGPEEKVVGLHIIGLGSGEILQGFGVAVNMGATKADFDNCVAIHPTSAEELVTLK</sequence>